<dbReference type="EMBL" id="CP000828">
    <property type="protein sequence ID" value="ABW29682.1"/>
    <property type="molecule type" value="Genomic_DNA"/>
</dbReference>
<dbReference type="RefSeq" id="WP_010469303.1">
    <property type="nucleotide sequence ID" value="NC_009925.1"/>
</dbReference>
<dbReference type="SMR" id="B0C1E7"/>
<dbReference type="STRING" id="329726.AM1_4710"/>
<dbReference type="KEGG" id="amr:AM1_4710"/>
<dbReference type="eggNOG" id="COG0097">
    <property type="taxonomic scope" value="Bacteria"/>
</dbReference>
<dbReference type="HOGENOM" id="CLU_065464_1_2_3"/>
<dbReference type="OrthoDB" id="9805007at2"/>
<dbReference type="Proteomes" id="UP000000268">
    <property type="component" value="Chromosome"/>
</dbReference>
<dbReference type="GO" id="GO:0022625">
    <property type="term" value="C:cytosolic large ribosomal subunit"/>
    <property type="evidence" value="ECO:0007669"/>
    <property type="project" value="TreeGrafter"/>
</dbReference>
<dbReference type="GO" id="GO:0019843">
    <property type="term" value="F:rRNA binding"/>
    <property type="evidence" value="ECO:0007669"/>
    <property type="project" value="UniProtKB-UniRule"/>
</dbReference>
<dbReference type="GO" id="GO:0003735">
    <property type="term" value="F:structural constituent of ribosome"/>
    <property type="evidence" value="ECO:0007669"/>
    <property type="project" value="InterPro"/>
</dbReference>
<dbReference type="GO" id="GO:0002181">
    <property type="term" value="P:cytoplasmic translation"/>
    <property type="evidence" value="ECO:0007669"/>
    <property type="project" value="TreeGrafter"/>
</dbReference>
<dbReference type="FunFam" id="3.90.930.12:FF:000001">
    <property type="entry name" value="50S ribosomal protein L6"/>
    <property type="match status" value="1"/>
</dbReference>
<dbReference type="FunFam" id="3.90.930.12:FF:000002">
    <property type="entry name" value="50S ribosomal protein L6"/>
    <property type="match status" value="1"/>
</dbReference>
<dbReference type="Gene3D" id="3.90.930.12">
    <property type="entry name" value="Ribosomal protein L6, alpha-beta domain"/>
    <property type="match status" value="2"/>
</dbReference>
<dbReference type="HAMAP" id="MF_01365_B">
    <property type="entry name" value="Ribosomal_uL6_B"/>
    <property type="match status" value="1"/>
</dbReference>
<dbReference type="InterPro" id="IPR000702">
    <property type="entry name" value="Ribosomal_uL6-like"/>
</dbReference>
<dbReference type="InterPro" id="IPR036789">
    <property type="entry name" value="Ribosomal_uL6-like_a/b-dom_sf"/>
</dbReference>
<dbReference type="InterPro" id="IPR020040">
    <property type="entry name" value="Ribosomal_uL6_a/b-dom"/>
</dbReference>
<dbReference type="InterPro" id="IPR019906">
    <property type="entry name" value="Ribosomal_uL6_bac-type"/>
</dbReference>
<dbReference type="InterPro" id="IPR002358">
    <property type="entry name" value="Ribosomal_uL6_CS"/>
</dbReference>
<dbReference type="NCBIfam" id="TIGR03654">
    <property type="entry name" value="L6_bact"/>
    <property type="match status" value="1"/>
</dbReference>
<dbReference type="PANTHER" id="PTHR11655">
    <property type="entry name" value="60S/50S RIBOSOMAL PROTEIN L6/L9"/>
    <property type="match status" value="1"/>
</dbReference>
<dbReference type="PANTHER" id="PTHR11655:SF14">
    <property type="entry name" value="LARGE RIBOSOMAL SUBUNIT PROTEIN UL6M"/>
    <property type="match status" value="1"/>
</dbReference>
<dbReference type="Pfam" id="PF00347">
    <property type="entry name" value="Ribosomal_L6"/>
    <property type="match status" value="2"/>
</dbReference>
<dbReference type="PIRSF" id="PIRSF002162">
    <property type="entry name" value="Ribosomal_L6"/>
    <property type="match status" value="1"/>
</dbReference>
<dbReference type="PRINTS" id="PR00059">
    <property type="entry name" value="RIBOSOMALL6"/>
</dbReference>
<dbReference type="SUPFAM" id="SSF56053">
    <property type="entry name" value="Ribosomal protein L6"/>
    <property type="match status" value="2"/>
</dbReference>
<dbReference type="PROSITE" id="PS00525">
    <property type="entry name" value="RIBOSOMAL_L6_1"/>
    <property type="match status" value="1"/>
</dbReference>
<evidence type="ECO:0000255" key="1">
    <source>
        <dbReference type="HAMAP-Rule" id="MF_01365"/>
    </source>
</evidence>
<evidence type="ECO:0000305" key="2"/>
<keyword id="KW-1185">Reference proteome</keyword>
<keyword id="KW-0687">Ribonucleoprotein</keyword>
<keyword id="KW-0689">Ribosomal protein</keyword>
<keyword id="KW-0694">RNA-binding</keyword>
<keyword id="KW-0699">rRNA-binding</keyword>
<reference key="1">
    <citation type="journal article" date="2008" name="Proc. Natl. Acad. Sci. U.S.A.">
        <title>Niche adaptation and genome expansion in the chlorophyll d-producing cyanobacterium Acaryochloris marina.</title>
        <authorList>
            <person name="Swingley W.D."/>
            <person name="Chen M."/>
            <person name="Cheung P.C."/>
            <person name="Conrad A.L."/>
            <person name="Dejesa L.C."/>
            <person name="Hao J."/>
            <person name="Honchak B.M."/>
            <person name="Karbach L.E."/>
            <person name="Kurdoglu A."/>
            <person name="Lahiri S."/>
            <person name="Mastrian S.D."/>
            <person name="Miyashita H."/>
            <person name="Page L."/>
            <person name="Ramakrishna P."/>
            <person name="Satoh S."/>
            <person name="Sattley W.M."/>
            <person name="Shimada Y."/>
            <person name="Taylor H.L."/>
            <person name="Tomo T."/>
            <person name="Tsuchiya T."/>
            <person name="Wang Z.T."/>
            <person name="Raymond J."/>
            <person name="Mimuro M."/>
            <person name="Blankenship R.E."/>
            <person name="Touchman J.W."/>
        </authorList>
    </citation>
    <scope>NUCLEOTIDE SEQUENCE [LARGE SCALE GENOMIC DNA]</scope>
    <source>
        <strain>MBIC 11017</strain>
    </source>
</reference>
<feature type="chain" id="PRO_1000087027" description="Large ribosomal subunit protein uL6">
    <location>
        <begin position="1"/>
        <end position="179"/>
    </location>
</feature>
<comment type="function">
    <text evidence="1">This protein binds to the 23S rRNA, and is important in its secondary structure. It is located near the subunit interface in the base of the L7/L12 stalk, and near the tRNA binding site of the peptidyltransferase center.</text>
</comment>
<comment type="subunit">
    <text evidence="1">Part of the 50S ribosomal subunit.</text>
</comment>
<comment type="similarity">
    <text evidence="1">Belongs to the universal ribosomal protein uL6 family.</text>
</comment>
<proteinExistence type="inferred from homology"/>
<sequence>MSRIGKVPIPIPDKVNVTIKGQAVTVKGPKGELSREITPEVAIEQADNLVTVTRRNESRIARQRHGLSRTLIANMVEGVSKGFEKKLQIQGVGYRAQVQGRNLILNVGYSNPVTIEPPEGVQVAVESNTNVIVSGINKEVVGNTAARIRAVRPPEPYKGKGIRYADEYVRRKVGKAGKK</sequence>
<protein>
    <recommendedName>
        <fullName evidence="1">Large ribosomal subunit protein uL6</fullName>
    </recommendedName>
    <alternativeName>
        <fullName evidence="2">50S ribosomal protein L6</fullName>
    </alternativeName>
</protein>
<organism>
    <name type="scientific">Acaryochloris marina (strain MBIC 11017)</name>
    <dbReference type="NCBI Taxonomy" id="329726"/>
    <lineage>
        <taxon>Bacteria</taxon>
        <taxon>Bacillati</taxon>
        <taxon>Cyanobacteriota</taxon>
        <taxon>Cyanophyceae</taxon>
        <taxon>Acaryochloridales</taxon>
        <taxon>Acaryochloridaceae</taxon>
        <taxon>Acaryochloris</taxon>
    </lineage>
</organism>
<accession>B0C1E7</accession>
<name>RL6_ACAM1</name>
<gene>
    <name evidence="1" type="primary">rplF</name>
    <name evidence="1" type="synonym">rpl6</name>
    <name type="ordered locus">AM1_4710</name>
</gene>